<comment type="function">
    <text evidence="2">Required during biogenesis of c-type cytochromes (cytochrome c6 and cytochrome f) at the step of heme attachment.</text>
</comment>
<comment type="subunit">
    <text evidence="1">May interact with ccs1.</text>
</comment>
<comment type="subcellular location">
    <subcellularLocation>
        <location evidence="2">Cellular thylakoid membrane</location>
        <topology evidence="2">Multi-pass membrane protein</topology>
    </subcellularLocation>
</comment>
<comment type="similarity">
    <text evidence="2">Belongs to the CcmF/CycK/Ccl1/NrfE/CcsA family.</text>
</comment>
<organism>
    <name type="scientific">Rippkaea orientalis (strain PCC 8801 / RF-1)</name>
    <name type="common">Cyanothece sp. (strain PCC 8801)</name>
    <dbReference type="NCBI Taxonomy" id="41431"/>
    <lineage>
        <taxon>Bacteria</taxon>
        <taxon>Bacillati</taxon>
        <taxon>Cyanobacteriota</taxon>
        <taxon>Cyanophyceae</taxon>
        <taxon>Oscillatoriophycideae</taxon>
        <taxon>Chroococcales</taxon>
        <taxon>Aphanothecaceae</taxon>
        <taxon>Rippkaea</taxon>
        <taxon>Rippkaea orientalis</taxon>
    </lineage>
</organism>
<sequence>MNLITLENFLDNSSFLILLLTMLIYWAGAAFPGMSILPTLGTAGVAIANLSIATLLGSRWLEGGYFPLSNLYESLFFLAWGVTAVHLIAEKMSRSTLVGVVTTPVAMGITAFAALSLPADMQTSAPLVPALKSNWLMMHVSVMMLSYATLMVGAVLAIAFLIVTRGQDVELRGSSVGTGSYRNKLGRIQLSQAEKTPDGSVVAMADGNGSVGTAVLDRVDPQTLVTDLPNLSPQRLNLADTLDNISYRIIGLGFPLLTIGIIAGAVWANEAWGSYWSWDPKETWALITWLVFAAYLHARITRGWQGRKPAILAASGFIVVWVCYLGVNLLGKGLHSYGWFF</sequence>
<accession>B7K1C1</accession>
<reference key="1">
    <citation type="journal article" date="2011" name="MBio">
        <title>Novel metabolic attributes of the genus Cyanothece, comprising a group of unicellular nitrogen-fixing Cyanobacteria.</title>
        <authorList>
            <person name="Bandyopadhyay A."/>
            <person name="Elvitigala T."/>
            <person name="Welsh E."/>
            <person name="Stockel J."/>
            <person name="Liberton M."/>
            <person name="Min H."/>
            <person name="Sherman L.A."/>
            <person name="Pakrasi H.B."/>
        </authorList>
    </citation>
    <scope>NUCLEOTIDE SEQUENCE [LARGE SCALE GENOMIC DNA]</scope>
    <source>
        <strain>PCC 8801 / RF-1</strain>
    </source>
</reference>
<evidence type="ECO:0000250" key="1"/>
<evidence type="ECO:0000255" key="2">
    <source>
        <dbReference type="HAMAP-Rule" id="MF_01391"/>
    </source>
</evidence>
<proteinExistence type="inferred from homology"/>
<gene>
    <name evidence="2" type="primary">ccsA</name>
    <name type="ordered locus">PCC8801_2297</name>
</gene>
<protein>
    <recommendedName>
        <fullName evidence="2">Cytochrome c biogenesis protein CcsA</fullName>
    </recommendedName>
</protein>
<feature type="chain" id="PRO_1000145249" description="Cytochrome c biogenesis protein CcsA">
    <location>
        <begin position="1"/>
        <end position="341"/>
    </location>
</feature>
<feature type="transmembrane region" description="Helical" evidence="2">
    <location>
        <begin position="16"/>
        <end position="36"/>
    </location>
</feature>
<feature type="transmembrane region" description="Helical" evidence="2">
    <location>
        <begin position="37"/>
        <end position="57"/>
    </location>
</feature>
<feature type="transmembrane region" description="Helical" evidence="2">
    <location>
        <begin position="68"/>
        <end position="88"/>
    </location>
</feature>
<feature type="transmembrane region" description="Helical" evidence="2">
    <location>
        <begin position="97"/>
        <end position="117"/>
    </location>
</feature>
<feature type="transmembrane region" description="Helical" evidence="2">
    <location>
        <begin position="142"/>
        <end position="162"/>
    </location>
</feature>
<feature type="transmembrane region" description="Helical" evidence="2">
    <location>
        <begin position="249"/>
        <end position="269"/>
    </location>
</feature>
<feature type="transmembrane region" description="Helical" evidence="2">
    <location>
        <begin position="276"/>
        <end position="296"/>
    </location>
</feature>
<feature type="transmembrane region" description="Helical" evidence="2">
    <location>
        <begin position="310"/>
        <end position="330"/>
    </location>
</feature>
<name>CCSA_RIPO1</name>
<keyword id="KW-0201">Cytochrome c-type biogenesis</keyword>
<keyword id="KW-0472">Membrane</keyword>
<keyword id="KW-1185">Reference proteome</keyword>
<keyword id="KW-0793">Thylakoid</keyword>
<keyword id="KW-0812">Transmembrane</keyword>
<keyword id="KW-1133">Transmembrane helix</keyword>
<dbReference type="EMBL" id="CP001287">
    <property type="protein sequence ID" value="ACK66316.1"/>
    <property type="molecule type" value="Genomic_DNA"/>
</dbReference>
<dbReference type="RefSeq" id="WP_012595584.1">
    <property type="nucleotide sequence ID" value="NC_011726.1"/>
</dbReference>
<dbReference type="SMR" id="B7K1C1"/>
<dbReference type="STRING" id="41431.PCC8801_2297"/>
<dbReference type="KEGG" id="cyp:PCC8801_2297"/>
<dbReference type="eggNOG" id="COG0755">
    <property type="taxonomic scope" value="Bacteria"/>
</dbReference>
<dbReference type="HOGENOM" id="CLU_049710_2_4_3"/>
<dbReference type="OrthoDB" id="9814290at2"/>
<dbReference type="Proteomes" id="UP000008204">
    <property type="component" value="Chromosome"/>
</dbReference>
<dbReference type="GO" id="GO:0031676">
    <property type="term" value="C:plasma membrane-derived thylakoid membrane"/>
    <property type="evidence" value="ECO:0007669"/>
    <property type="project" value="UniProtKB-SubCell"/>
</dbReference>
<dbReference type="GO" id="GO:0020037">
    <property type="term" value="F:heme binding"/>
    <property type="evidence" value="ECO:0007669"/>
    <property type="project" value="InterPro"/>
</dbReference>
<dbReference type="GO" id="GO:0017004">
    <property type="term" value="P:cytochrome complex assembly"/>
    <property type="evidence" value="ECO:0007669"/>
    <property type="project" value="UniProtKB-UniRule"/>
</dbReference>
<dbReference type="HAMAP" id="MF_01391">
    <property type="entry name" value="CytC_CcsA"/>
    <property type="match status" value="1"/>
</dbReference>
<dbReference type="InterPro" id="IPR002541">
    <property type="entry name" value="Cyt_c_assembly"/>
</dbReference>
<dbReference type="InterPro" id="IPR017562">
    <property type="entry name" value="Cyt_c_biogenesis_CcsA"/>
</dbReference>
<dbReference type="InterPro" id="IPR045062">
    <property type="entry name" value="Cyt_c_biogenesis_CcsA/CcmC"/>
</dbReference>
<dbReference type="NCBIfam" id="TIGR03144">
    <property type="entry name" value="cytochr_II_ccsB"/>
    <property type="match status" value="1"/>
</dbReference>
<dbReference type="PANTHER" id="PTHR30071:SF1">
    <property type="entry name" value="CYTOCHROME B_B6 PROTEIN-RELATED"/>
    <property type="match status" value="1"/>
</dbReference>
<dbReference type="PANTHER" id="PTHR30071">
    <property type="entry name" value="HEME EXPORTER PROTEIN C"/>
    <property type="match status" value="1"/>
</dbReference>
<dbReference type="Pfam" id="PF01578">
    <property type="entry name" value="Cytochrom_C_asm"/>
    <property type="match status" value="1"/>
</dbReference>